<feature type="chain" id="PRO_1000204716" description="Protein RecA">
    <location>
        <begin position="1"/>
        <end position="378"/>
    </location>
</feature>
<feature type="binding site" evidence="1">
    <location>
        <begin position="79"/>
        <end position="86"/>
    </location>
    <ligand>
        <name>ATP</name>
        <dbReference type="ChEBI" id="CHEBI:30616"/>
    </ligand>
</feature>
<protein>
    <recommendedName>
        <fullName evidence="1">Protein RecA</fullName>
    </recommendedName>
    <alternativeName>
        <fullName evidence="1">Recombinase A</fullName>
    </alternativeName>
</protein>
<sequence>MAKKVKKNEEITKKFGDERRKALDDALKNIEKDFGKGAVMRLGERAEQKVQVMSSGSLALDIALGAGGYPKGRIIEIYGPESSGKTTVALHAVAQAQKEGGIAAFIDAEHALDPAYAAALGVNIDELLLSQPDSGEQGLEIAGKLIDSGAVDLVVVDSVAALVPRAEIDGDIGDNHVGLQARMMSQAMRKLSASINKTKTIAIFINQLREKVGVMFGNPETTPGGRALKFYASVRLDVRGTTQIKGTGDQKDSSIGKETKIKVVKNKVAPPFKVAEVEIMYGEGISRTGELIKIASDLDIIQKAGAWFSYNGEKIGQGSENAKRYLADHPELFDEIDHKVRVKFGLLEDTEESAAADTVAAKADELVLELDDAIEIED</sequence>
<reference key="1">
    <citation type="journal article" date="2009" name="PLoS Pathog.">
        <title>Genomic evidence for the evolution of Streptococcus equi: host restriction, increased virulence, and genetic exchange with human pathogens.</title>
        <authorList>
            <person name="Holden M.T.G."/>
            <person name="Heather Z."/>
            <person name="Paillot R."/>
            <person name="Steward K.F."/>
            <person name="Webb K."/>
            <person name="Ainslie F."/>
            <person name="Jourdan T."/>
            <person name="Bason N.C."/>
            <person name="Holroyd N.E."/>
            <person name="Mungall K."/>
            <person name="Quail M.A."/>
            <person name="Sanders M."/>
            <person name="Simmonds M."/>
            <person name="Willey D."/>
            <person name="Brooks K."/>
            <person name="Aanensen D.M."/>
            <person name="Spratt B.G."/>
            <person name="Jolley K.A."/>
            <person name="Maiden M.C.J."/>
            <person name="Kehoe M."/>
            <person name="Chanter N."/>
            <person name="Bentley S.D."/>
            <person name="Robinson C."/>
            <person name="Maskell D.J."/>
            <person name="Parkhill J."/>
            <person name="Waller A.S."/>
        </authorList>
    </citation>
    <scope>NUCLEOTIDE SEQUENCE [LARGE SCALE GENOMIC DNA]</scope>
    <source>
        <strain>H70</strain>
    </source>
</reference>
<keyword id="KW-0067">ATP-binding</keyword>
<keyword id="KW-0963">Cytoplasm</keyword>
<keyword id="KW-0227">DNA damage</keyword>
<keyword id="KW-0233">DNA recombination</keyword>
<keyword id="KW-0234">DNA repair</keyword>
<keyword id="KW-0238">DNA-binding</keyword>
<keyword id="KW-0547">Nucleotide-binding</keyword>
<keyword id="KW-0742">SOS response</keyword>
<gene>
    <name evidence="1" type="primary">recA</name>
    <name type="ordered locus">SZO_18640</name>
</gene>
<evidence type="ECO:0000255" key="1">
    <source>
        <dbReference type="HAMAP-Rule" id="MF_00268"/>
    </source>
</evidence>
<comment type="function">
    <text evidence="1">Can catalyze the hydrolysis of ATP in the presence of single-stranded DNA, the ATP-dependent uptake of single-stranded DNA by duplex DNA, and the ATP-dependent hybridization of homologous single-stranded DNAs. It interacts with LexA causing its activation and leading to its autocatalytic cleavage.</text>
</comment>
<comment type="subcellular location">
    <subcellularLocation>
        <location evidence="1">Cytoplasm</location>
    </subcellularLocation>
</comment>
<comment type="similarity">
    <text evidence="1">Belongs to the RecA family.</text>
</comment>
<accession>C0MGB6</accession>
<organism>
    <name type="scientific">Streptococcus equi subsp. zooepidemicus (strain H70)</name>
    <dbReference type="NCBI Taxonomy" id="553483"/>
    <lineage>
        <taxon>Bacteria</taxon>
        <taxon>Bacillati</taxon>
        <taxon>Bacillota</taxon>
        <taxon>Bacilli</taxon>
        <taxon>Lactobacillales</taxon>
        <taxon>Streptococcaceae</taxon>
        <taxon>Streptococcus</taxon>
    </lineage>
</organism>
<proteinExistence type="inferred from homology"/>
<name>RECA_STRS7</name>
<dbReference type="EMBL" id="FM204884">
    <property type="protein sequence ID" value="CAX00795.1"/>
    <property type="molecule type" value="Genomic_DNA"/>
</dbReference>
<dbReference type="SMR" id="C0MGB6"/>
<dbReference type="KEGG" id="seq:SZO_18640"/>
<dbReference type="eggNOG" id="COG0468">
    <property type="taxonomic scope" value="Bacteria"/>
</dbReference>
<dbReference type="HOGENOM" id="CLU_040469_3_2_9"/>
<dbReference type="Proteomes" id="UP000001368">
    <property type="component" value="Chromosome"/>
</dbReference>
<dbReference type="GO" id="GO:0005829">
    <property type="term" value="C:cytosol"/>
    <property type="evidence" value="ECO:0007669"/>
    <property type="project" value="TreeGrafter"/>
</dbReference>
<dbReference type="GO" id="GO:0005524">
    <property type="term" value="F:ATP binding"/>
    <property type="evidence" value="ECO:0007669"/>
    <property type="project" value="UniProtKB-UniRule"/>
</dbReference>
<dbReference type="GO" id="GO:0016887">
    <property type="term" value="F:ATP hydrolysis activity"/>
    <property type="evidence" value="ECO:0007669"/>
    <property type="project" value="InterPro"/>
</dbReference>
<dbReference type="GO" id="GO:0140664">
    <property type="term" value="F:ATP-dependent DNA damage sensor activity"/>
    <property type="evidence" value="ECO:0007669"/>
    <property type="project" value="InterPro"/>
</dbReference>
<dbReference type="GO" id="GO:0003684">
    <property type="term" value="F:damaged DNA binding"/>
    <property type="evidence" value="ECO:0007669"/>
    <property type="project" value="UniProtKB-UniRule"/>
</dbReference>
<dbReference type="GO" id="GO:0003697">
    <property type="term" value="F:single-stranded DNA binding"/>
    <property type="evidence" value="ECO:0007669"/>
    <property type="project" value="UniProtKB-UniRule"/>
</dbReference>
<dbReference type="GO" id="GO:0006310">
    <property type="term" value="P:DNA recombination"/>
    <property type="evidence" value="ECO:0007669"/>
    <property type="project" value="UniProtKB-UniRule"/>
</dbReference>
<dbReference type="GO" id="GO:0006281">
    <property type="term" value="P:DNA repair"/>
    <property type="evidence" value="ECO:0007669"/>
    <property type="project" value="UniProtKB-UniRule"/>
</dbReference>
<dbReference type="GO" id="GO:0009432">
    <property type="term" value="P:SOS response"/>
    <property type="evidence" value="ECO:0007669"/>
    <property type="project" value="UniProtKB-UniRule"/>
</dbReference>
<dbReference type="CDD" id="cd00983">
    <property type="entry name" value="RecA"/>
    <property type="match status" value="1"/>
</dbReference>
<dbReference type="FunFam" id="3.40.50.300:FF:000087">
    <property type="entry name" value="Recombinase RecA"/>
    <property type="match status" value="1"/>
</dbReference>
<dbReference type="Gene3D" id="3.40.50.300">
    <property type="entry name" value="P-loop containing nucleotide triphosphate hydrolases"/>
    <property type="match status" value="1"/>
</dbReference>
<dbReference type="HAMAP" id="MF_00268">
    <property type="entry name" value="RecA"/>
    <property type="match status" value="1"/>
</dbReference>
<dbReference type="InterPro" id="IPR003593">
    <property type="entry name" value="AAA+_ATPase"/>
</dbReference>
<dbReference type="InterPro" id="IPR013765">
    <property type="entry name" value="DNA_recomb/repair_RecA"/>
</dbReference>
<dbReference type="InterPro" id="IPR020584">
    <property type="entry name" value="DNA_recomb/repair_RecA_CS"/>
</dbReference>
<dbReference type="InterPro" id="IPR027417">
    <property type="entry name" value="P-loop_NTPase"/>
</dbReference>
<dbReference type="InterPro" id="IPR049261">
    <property type="entry name" value="RecA-like_C"/>
</dbReference>
<dbReference type="InterPro" id="IPR049428">
    <property type="entry name" value="RecA-like_N"/>
</dbReference>
<dbReference type="InterPro" id="IPR020588">
    <property type="entry name" value="RecA_ATP-bd"/>
</dbReference>
<dbReference type="InterPro" id="IPR023400">
    <property type="entry name" value="RecA_C_sf"/>
</dbReference>
<dbReference type="InterPro" id="IPR020587">
    <property type="entry name" value="RecA_monomer-monomer_interface"/>
</dbReference>
<dbReference type="NCBIfam" id="TIGR02012">
    <property type="entry name" value="tigrfam_recA"/>
    <property type="match status" value="1"/>
</dbReference>
<dbReference type="PANTHER" id="PTHR45900:SF1">
    <property type="entry name" value="MITOCHONDRIAL DNA REPAIR PROTEIN RECA HOMOLOG-RELATED"/>
    <property type="match status" value="1"/>
</dbReference>
<dbReference type="PANTHER" id="PTHR45900">
    <property type="entry name" value="RECA"/>
    <property type="match status" value="1"/>
</dbReference>
<dbReference type="Pfam" id="PF00154">
    <property type="entry name" value="RecA"/>
    <property type="match status" value="1"/>
</dbReference>
<dbReference type="Pfam" id="PF21096">
    <property type="entry name" value="RecA_C"/>
    <property type="match status" value="1"/>
</dbReference>
<dbReference type="PRINTS" id="PR00142">
    <property type="entry name" value="RECA"/>
</dbReference>
<dbReference type="SMART" id="SM00382">
    <property type="entry name" value="AAA"/>
    <property type="match status" value="1"/>
</dbReference>
<dbReference type="SUPFAM" id="SSF52540">
    <property type="entry name" value="P-loop containing nucleoside triphosphate hydrolases"/>
    <property type="match status" value="1"/>
</dbReference>
<dbReference type="SUPFAM" id="SSF54752">
    <property type="entry name" value="RecA protein, C-terminal domain"/>
    <property type="match status" value="1"/>
</dbReference>
<dbReference type="PROSITE" id="PS00321">
    <property type="entry name" value="RECA_1"/>
    <property type="match status" value="1"/>
</dbReference>
<dbReference type="PROSITE" id="PS50162">
    <property type="entry name" value="RECA_2"/>
    <property type="match status" value="1"/>
</dbReference>
<dbReference type="PROSITE" id="PS50163">
    <property type="entry name" value="RECA_3"/>
    <property type="match status" value="1"/>
</dbReference>